<organism>
    <name type="scientific">Homo sapiens</name>
    <name type="common">Human</name>
    <dbReference type="NCBI Taxonomy" id="9606"/>
    <lineage>
        <taxon>Eukaryota</taxon>
        <taxon>Metazoa</taxon>
        <taxon>Chordata</taxon>
        <taxon>Craniata</taxon>
        <taxon>Vertebrata</taxon>
        <taxon>Euteleostomi</taxon>
        <taxon>Mammalia</taxon>
        <taxon>Eutheria</taxon>
        <taxon>Euarchontoglires</taxon>
        <taxon>Primates</taxon>
        <taxon>Haplorrhini</taxon>
        <taxon>Catarrhini</taxon>
        <taxon>Hominidae</taxon>
        <taxon>Homo</taxon>
    </lineage>
</organism>
<comment type="function">
    <text>Catalyzes the phosphorylation of D-fructose 6-phosphate to fructose 1,6-bisphosphate by ATP, the first committing step of glycolysis.</text>
</comment>
<comment type="catalytic activity">
    <reaction evidence="4">
        <text>beta-D-fructose 6-phosphate + ATP = beta-D-fructose 1,6-bisphosphate + ADP + H(+)</text>
        <dbReference type="Rhea" id="RHEA:16109"/>
        <dbReference type="ChEBI" id="CHEBI:15378"/>
        <dbReference type="ChEBI" id="CHEBI:30616"/>
        <dbReference type="ChEBI" id="CHEBI:32966"/>
        <dbReference type="ChEBI" id="CHEBI:57634"/>
        <dbReference type="ChEBI" id="CHEBI:456216"/>
        <dbReference type="EC" id="2.7.1.11"/>
    </reaction>
</comment>
<comment type="cofactor">
    <cofactor>
        <name>Mg(2+)</name>
        <dbReference type="ChEBI" id="CHEBI:18420"/>
    </cofactor>
</comment>
<comment type="activity regulation">
    <text evidence="4">Allosterically activated by ADP, AMP, or fructose 2,6-bisphosphate, and allosterically inhibited by ATP or citrate.</text>
</comment>
<comment type="pathway">
    <text evidence="4">Carbohydrate degradation; glycolysis; D-glyceraldehyde 3-phosphate and glycerone phosphate from D-glucose: step 3/4.</text>
</comment>
<comment type="subunit">
    <text evidence="4 5 7">Homo- and heterotetramers (By similarity). Phosphofructokinase (PFK) enzyme functions as a tetramer composed of different combinations of 3 types of subunits, called PFKM (where M stands for Muscle), PFKL (Liver) and PFKP (Platelet). The composition of the PFK tetramer differs according to the tissue type it is present in. In muscles, it is composed of 4 PFKM subunits (also called M4). In the liver, the predominant form is a tetramer of PFKL subunits (L4). In erythrocytes, both PFKM and PFKL subunits randomly tetramerize to form M4, L4 and other combinations (ML3, M2L2, M3L). In platelets, brain and fibroblasts, PFK contains a higher proportion of PFKP subunits. The kinetic and regulatory properties of the tetrameric enzyme are dependent on the subunit composition, hence can vary across tissues (Probable). Interacts with ATG4B; promoting phosphorylation of ATG4B (PubMed:33607258).</text>
</comment>
<comment type="interaction">
    <interactant intactId="EBI-359022">
        <id>Q01813</id>
    </interactant>
    <interactant intactId="EBI-591778">
        <id>P61970</id>
        <label>NUTF2</label>
    </interactant>
    <organismsDiffer>false</organismsDiffer>
    <experiments>3</experiments>
</comment>
<comment type="interaction">
    <interactant intactId="EBI-359022">
        <id>Q01813</id>
    </interactant>
    <interactant intactId="EBI-514788">
        <id>P08237</id>
        <label>PFKM</label>
    </interactant>
    <organismsDiffer>false</organismsDiffer>
    <experiments>2</experiments>
</comment>
<comment type="interaction">
    <interactant intactId="EBI-16157890">
        <id>Q01813-1</id>
    </interactant>
    <interactant intactId="EBI-16157890">
        <id>Q01813-1</id>
        <label>PFKP</label>
    </interactant>
    <organismsDiffer>false</organismsDiffer>
    <experiments>3</experiments>
</comment>
<comment type="subcellular location">
    <subcellularLocation>
        <location evidence="4">Cytoplasm</location>
    </subcellularLocation>
</comment>
<comment type="alternative products">
    <event type="alternative splicing"/>
    <isoform>
        <id>Q01813-1</id>
        <name>1</name>
        <sequence type="displayed"/>
    </isoform>
    <isoform>
        <id>Q01813-2</id>
        <name>2</name>
        <sequence type="described" ref="VSP_046416"/>
    </isoform>
</comment>
<comment type="PTM">
    <text evidence="5">Phosphorylation at Ser-386 promotes interaction with ATG4B.</text>
</comment>
<comment type="PTM">
    <text evidence="1">GlcNAcylation decreases enzyme activity.</text>
</comment>
<comment type="miscellaneous">
    <text>In human PFK exists as a system of 3 types of subunits, PFKM (muscle), PFKL (liver) and PFKP (platelet) isoenzymes.</text>
</comment>
<comment type="similarity">
    <text evidence="4">Belongs to the phosphofructokinase type A (PFKA) family. ATP-dependent PFK group I subfamily. Eukaryotic two domain clade 'E' sub-subfamily.</text>
</comment>
<gene>
    <name type="primary">PFKP</name>
    <name type="synonym">PFKF</name>
</gene>
<sequence>MDADDSRAPKGSLRKFLEHLSGAGKAIGVLTSGGDAQGMNAAVRAVVRMGIYVGAKVYFIYEGYQGMVDGGSNIAEADWESVSSILQVGGTIIGSARCQAFRTREGRLKAACNLLQRGITNLCVIGGDGSLTGANLFRKEWSGLLEELARNGQIDKEAVQKYAYLNVVGMVGSIDNDFCGTDMTIGTDSALHRIIEVVDAIMTTAQSHQRTFVLEVMGRHCGYLALVSALACGADWVFLPESPPEEGWEEQMCVKLSENRARKKRLNIIIVAEGAIDTQNKPITSEKIKELVVTQLGYDTRVTILGHVQRGGTPSAFDRILASRMGVEAVIALLEATPDTPACVVSLNGNHAVRLPLMECVQMTQDVQKAMDERRFQDAVRLRGRSFAGNLNTYKRLAIKLPDDQIPKTNCNVAVINVGAPAAGMNAAVRSAVRVGIADGHRMLAIYDGFDGFAKGQIKEIGWTDVGGWTGQGGSILGTKRVLPGKYLEEIATQMRTHSINALLIIGGFEAYLGLLELSAAREKHEEFCVPMVMVPATVSNNVPGSDFSIGADTALNTITDTCDRIKQSASGTKRRVFIIETMGGYCGYLANMGGLAAGADAAYIFEEPFDIRDLQSNVEHLTEKMKTTIQRGLVLRNESCSENYTTDFIYQLYSEEGKGVFDCRKNVLGHMQQGGAPSPFDRNFGTKISARAMEWITAKLKEARGRGKKFTTDDSICVLGISKRNVIFQPVAELKKQTDFEHRIPKEQWWLKLRPLMKILAKYKASYDVSDSGQLEHVQPWSV</sequence>
<protein>
    <recommendedName>
        <fullName evidence="4">ATP-dependent 6-phosphofructokinase, platelet type</fullName>
        <shortName evidence="4">ATP-PFK</shortName>
        <shortName>PFK-P</shortName>
        <ecNumber evidence="4">2.7.1.11</ecNumber>
    </recommendedName>
    <alternativeName>
        <fullName>6-phosphofructokinase type C</fullName>
    </alternativeName>
    <alternativeName>
        <fullName>Phosphofructo-1-kinase isozyme C</fullName>
        <shortName>PFK-C</shortName>
    </alternativeName>
    <alternativeName>
        <fullName evidence="4">Phosphohexokinase</fullName>
    </alternativeName>
</protein>
<reference key="1">
    <citation type="journal article" date="1994" name="Biochem. Biophys. Res. Commun.">
        <title>Cloning of a complete protein-coding sequence of human platelet-type phosphofructokinase isozyme from pancreatic islet.</title>
        <authorList>
            <person name="Eto K."/>
            <person name="Sakura H."/>
            <person name="Yasuda K."/>
            <person name="Hayakawa T."/>
            <person name="Kawasaki E."/>
            <person name="Moriuchi R."/>
            <person name="Nagataki S."/>
            <person name="Yazaki Y."/>
            <person name="Kadowaki T."/>
        </authorList>
    </citation>
    <scope>NUCLEOTIDE SEQUENCE [MRNA] (ISOFORM 1)</scope>
    <source>
        <tissue>Pancreatic islet</tissue>
    </source>
</reference>
<reference key="2">
    <citation type="journal article" date="2004" name="Nat. Genet.">
        <title>Complete sequencing and characterization of 21,243 full-length human cDNAs.</title>
        <authorList>
            <person name="Ota T."/>
            <person name="Suzuki Y."/>
            <person name="Nishikawa T."/>
            <person name="Otsuki T."/>
            <person name="Sugiyama T."/>
            <person name="Irie R."/>
            <person name="Wakamatsu A."/>
            <person name="Hayashi K."/>
            <person name="Sato H."/>
            <person name="Nagai K."/>
            <person name="Kimura K."/>
            <person name="Makita H."/>
            <person name="Sekine M."/>
            <person name="Obayashi M."/>
            <person name="Nishi T."/>
            <person name="Shibahara T."/>
            <person name="Tanaka T."/>
            <person name="Ishii S."/>
            <person name="Yamamoto J."/>
            <person name="Saito K."/>
            <person name="Kawai Y."/>
            <person name="Isono Y."/>
            <person name="Nakamura Y."/>
            <person name="Nagahari K."/>
            <person name="Murakami K."/>
            <person name="Yasuda T."/>
            <person name="Iwayanagi T."/>
            <person name="Wagatsuma M."/>
            <person name="Shiratori A."/>
            <person name="Sudo H."/>
            <person name="Hosoiri T."/>
            <person name="Kaku Y."/>
            <person name="Kodaira H."/>
            <person name="Kondo H."/>
            <person name="Sugawara M."/>
            <person name="Takahashi M."/>
            <person name="Kanda K."/>
            <person name="Yokoi T."/>
            <person name="Furuya T."/>
            <person name="Kikkawa E."/>
            <person name="Omura Y."/>
            <person name="Abe K."/>
            <person name="Kamihara K."/>
            <person name="Katsuta N."/>
            <person name="Sato K."/>
            <person name="Tanikawa M."/>
            <person name="Yamazaki M."/>
            <person name="Ninomiya K."/>
            <person name="Ishibashi T."/>
            <person name="Yamashita H."/>
            <person name="Murakawa K."/>
            <person name="Fujimori K."/>
            <person name="Tanai H."/>
            <person name="Kimata M."/>
            <person name="Watanabe M."/>
            <person name="Hiraoka S."/>
            <person name="Chiba Y."/>
            <person name="Ishida S."/>
            <person name="Ono Y."/>
            <person name="Takiguchi S."/>
            <person name="Watanabe S."/>
            <person name="Yosida M."/>
            <person name="Hotuta T."/>
            <person name="Kusano J."/>
            <person name="Kanehori K."/>
            <person name="Takahashi-Fujii A."/>
            <person name="Hara H."/>
            <person name="Tanase T.-O."/>
            <person name="Nomura Y."/>
            <person name="Togiya S."/>
            <person name="Komai F."/>
            <person name="Hara R."/>
            <person name="Takeuchi K."/>
            <person name="Arita M."/>
            <person name="Imose N."/>
            <person name="Musashino K."/>
            <person name="Yuuki H."/>
            <person name="Oshima A."/>
            <person name="Sasaki N."/>
            <person name="Aotsuka S."/>
            <person name="Yoshikawa Y."/>
            <person name="Matsunawa H."/>
            <person name="Ichihara T."/>
            <person name="Shiohata N."/>
            <person name="Sano S."/>
            <person name="Moriya S."/>
            <person name="Momiyama H."/>
            <person name="Satoh N."/>
            <person name="Takami S."/>
            <person name="Terashima Y."/>
            <person name="Suzuki O."/>
            <person name="Nakagawa S."/>
            <person name="Senoh A."/>
            <person name="Mizoguchi H."/>
            <person name="Goto Y."/>
            <person name="Shimizu F."/>
            <person name="Wakebe H."/>
            <person name="Hishigaki H."/>
            <person name="Watanabe T."/>
            <person name="Sugiyama A."/>
            <person name="Takemoto M."/>
            <person name="Kawakami B."/>
            <person name="Yamazaki M."/>
            <person name="Watanabe K."/>
            <person name="Kumagai A."/>
            <person name="Itakura S."/>
            <person name="Fukuzumi Y."/>
            <person name="Fujimori Y."/>
            <person name="Komiyama M."/>
            <person name="Tashiro H."/>
            <person name="Tanigami A."/>
            <person name="Fujiwara T."/>
            <person name="Ono T."/>
            <person name="Yamada K."/>
            <person name="Fujii Y."/>
            <person name="Ozaki K."/>
            <person name="Hirao M."/>
            <person name="Ohmori Y."/>
            <person name="Kawabata A."/>
            <person name="Hikiji T."/>
            <person name="Kobatake N."/>
            <person name="Inagaki H."/>
            <person name="Ikema Y."/>
            <person name="Okamoto S."/>
            <person name="Okitani R."/>
            <person name="Kawakami T."/>
            <person name="Noguchi S."/>
            <person name="Itoh T."/>
            <person name="Shigeta K."/>
            <person name="Senba T."/>
            <person name="Matsumura K."/>
            <person name="Nakajima Y."/>
            <person name="Mizuno T."/>
            <person name="Morinaga M."/>
            <person name="Sasaki M."/>
            <person name="Togashi T."/>
            <person name="Oyama M."/>
            <person name="Hata H."/>
            <person name="Watanabe M."/>
            <person name="Komatsu T."/>
            <person name="Mizushima-Sugano J."/>
            <person name="Satoh T."/>
            <person name="Shirai Y."/>
            <person name="Takahashi Y."/>
            <person name="Nakagawa K."/>
            <person name="Okumura K."/>
            <person name="Nagase T."/>
            <person name="Nomura N."/>
            <person name="Kikuchi H."/>
            <person name="Masuho Y."/>
            <person name="Yamashita R."/>
            <person name="Nakai K."/>
            <person name="Yada T."/>
            <person name="Nakamura Y."/>
            <person name="Ohara O."/>
            <person name="Isogai T."/>
            <person name="Sugano S."/>
        </authorList>
    </citation>
    <scope>NUCLEOTIDE SEQUENCE [LARGE SCALE MRNA] (ISOFORMS 1 AND 2)</scope>
    <source>
        <tissue>Prostate</tissue>
    </source>
</reference>
<reference key="3">
    <citation type="journal article" date="2004" name="Nature">
        <title>The DNA sequence and comparative analysis of human chromosome 10.</title>
        <authorList>
            <person name="Deloukas P."/>
            <person name="Earthrowl M.E."/>
            <person name="Grafham D.V."/>
            <person name="Rubenfield M."/>
            <person name="French L."/>
            <person name="Steward C.A."/>
            <person name="Sims S.K."/>
            <person name="Jones M.C."/>
            <person name="Searle S."/>
            <person name="Scott C."/>
            <person name="Howe K."/>
            <person name="Hunt S.E."/>
            <person name="Andrews T.D."/>
            <person name="Gilbert J.G.R."/>
            <person name="Swarbreck D."/>
            <person name="Ashurst J.L."/>
            <person name="Taylor A."/>
            <person name="Battles J."/>
            <person name="Bird C.P."/>
            <person name="Ainscough R."/>
            <person name="Almeida J.P."/>
            <person name="Ashwell R.I.S."/>
            <person name="Ambrose K.D."/>
            <person name="Babbage A.K."/>
            <person name="Bagguley C.L."/>
            <person name="Bailey J."/>
            <person name="Banerjee R."/>
            <person name="Bates K."/>
            <person name="Beasley H."/>
            <person name="Bray-Allen S."/>
            <person name="Brown A.J."/>
            <person name="Brown J.Y."/>
            <person name="Burford D.C."/>
            <person name="Burrill W."/>
            <person name="Burton J."/>
            <person name="Cahill P."/>
            <person name="Camire D."/>
            <person name="Carter N.P."/>
            <person name="Chapman J.C."/>
            <person name="Clark S.Y."/>
            <person name="Clarke G."/>
            <person name="Clee C.M."/>
            <person name="Clegg S."/>
            <person name="Corby N."/>
            <person name="Coulson A."/>
            <person name="Dhami P."/>
            <person name="Dutta I."/>
            <person name="Dunn M."/>
            <person name="Faulkner L."/>
            <person name="Frankish A."/>
            <person name="Frankland J.A."/>
            <person name="Garner P."/>
            <person name="Garnett J."/>
            <person name="Gribble S."/>
            <person name="Griffiths C."/>
            <person name="Grocock R."/>
            <person name="Gustafson E."/>
            <person name="Hammond S."/>
            <person name="Harley J.L."/>
            <person name="Hart E."/>
            <person name="Heath P.D."/>
            <person name="Ho T.P."/>
            <person name="Hopkins B."/>
            <person name="Horne J."/>
            <person name="Howden P.J."/>
            <person name="Huckle E."/>
            <person name="Hynds C."/>
            <person name="Johnson C."/>
            <person name="Johnson D."/>
            <person name="Kana A."/>
            <person name="Kay M."/>
            <person name="Kimberley A.M."/>
            <person name="Kershaw J.K."/>
            <person name="Kokkinaki M."/>
            <person name="Laird G.K."/>
            <person name="Lawlor S."/>
            <person name="Lee H.M."/>
            <person name="Leongamornlert D.A."/>
            <person name="Laird G."/>
            <person name="Lloyd C."/>
            <person name="Lloyd D.M."/>
            <person name="Loveland J."/>
            <person name="Lovell J."/>
            <person name="McLaren S."/>
            <person name="McLay K.E."/>
            <person name="McMurray A."/>
            <person name="Mashreghi-Mohammadi M."/>
            <person name="Matthews L."/>
            <person name="Milne S."/>
            <person name="Nickerson T."/>
            <person name="Nguyen M."/>
            <person name="Overton-Larty E."/>
            <person name="Palmer S.A."/>
            <person name="Pearce A.V."/>
            <person name="Peck A.I."/>
            <person name="Pelan S."/>
            <person name="Phillimore B."/>
            <person name="Porter K."/>
            <person name="Rice C.M."/>
            <person name="Rogosin A."/>
            <person name="Ross M.T."/>
            <person name="Sarafidou T."/>
            <person name="Sehra H.K."/>
            <person name="Shownkeen R."/>
            <person name="Skuce C.D."/>
            <person name="Smith M."/>
            <person name="Standring L."/>
            <person name="Sycamore N."/>
            <person name="Tester J."/>
            <person name="Thorpe A."/>
            <person name="Torcasso W."/>
            <person name="Tracey A."/>
            <person name="Tromans A."/>
            <person name="Tsolas J."/>
            <person name="Wall M."/>
            <person name="Walsh J."/>
            <person name="Wang H."/>
            <person name="Weinstock K."/>
            <person name="West A.P."/>
            <person name="Willey D.L."/>
            <person name="Whitehead S.L."/>
            <person name="Wilming L."/>
            <person name="Wray P.W."/>
            <person name="Young L."/>
            <person name="Chen Y."/>
            <person name="Lovering R.C."/>
            <person name="Moschonas N.K."/>
            <person name="Siebert R."/>
            <person name="Fechtel K."/>
            <person name="Bentley D."/>
            <person name="Durbin R.M."/>
            <person name="Hubbard T."/>
            <person name="Doucette-Stamm L."/>
            <person name="Beck S."/>
            <person name="Smith D.R."/>
            <person name="Rogers J."/>
        </authorList>
    </citation>
    <scope>NUCLEOTIDE SEQUENCE [LARGE SCALE GENOMIC DNA]</scope>
</reference>
<reference key="4">
    <citation type="journal article" date="2004" name="Genome Res.">
        <title>The status, quality, and expansion of the NIH full-length cDNA project: the Mammalian Gene Collection (MGC).</title>
        <authorList>
            <consortium name="The MGC Project Team"/>
        </authorList>
    </citation>
    <scope>NUCLEOTIDE SEQUENCE [LARGE SCALE MRNA] (ISOFORM 1)</scope>
    <source>
        <tissue>Brain</tissue>
        <tissue>Placenta</tissue>
    </source>
</reference>
<reference key="5">
    <citation type="journal article" date="1991" name="Biochem. Biophys. Res. Commun.">
        <title>Isolation and sequence of a cDNA encoding human platelet phosphofructokinase.</title>
        <authorList>
            <person name="Simpson C.J."/>
            <person name="Fothergill-Gilmore L.A."/>
        </authorList>
    </citation>
    <scope>NUCLEOTIDE SEQUENCE [MRNA] OF 484-784 (ISOFORM 1)</scope>
</reference>
<reference key="6">
    <citation type="journal article" date="2003" name="Nature">
        <title>Proteomic characterization of the human centrosome by protein correlation profiling.</title>
        <authorList>
            <person name="Andersen J.S."/>
            <person name="Wilkinson C.J."/>
            <person name="Mayor T."/>
            <person name="Mortensen P."/>
            <person name="Nigg E.A."/>
            <person name="Mann M."/>
        </authorList>
    </citation>
    <scope>IDENTIFICATION BY MASS SPECTROMETRY</scope>
    <source>
        <tissue>Lymphoblast</tissue>
    </source>
</reference>
<reference key="7">
    <citation type="journal article" date="2005" name="Nat. Biotechnol.">
        <title>Immunoaffinity profiling of tyrosine phosphorylation in cancer cells.</title>
        <authorList>
            <person name="Rush J."/>
            <person name="Moritz A."/>
            <person name="Lee K.A."/>
            <person name="Guo A."/>
            <person name="Goss V.L."/>
            <person name="Spek E.J."/>
            <person name="Zhang H."/>
            <person name="Zha X.-M."/>
            <person name="Polakiewicz R.D."/>
            <person name="Comb M.J."/>
        </authorList>
    </citation>
    <scope>PHOSPHORYLATION [LARGE SCALE ANALYSIS] AT TYR-651</scope>
    <scope>IDENTIFICATION BY MASS SPECTROMETRY [LARGE SCALE ANALYSIS]</scope>
</reference>
<reference key="8">
    <citation type="journal article" date="2006" name="Nat. Biotechnol.">
        <title>A probability-based approach for high-throughput protein phosphorylation analysis and site localization.</title>
        <authorList>
            <person name="Beausoleil S.A."/>
            <person name="Villen J."/>
            <person name="Gerber S.A."/>
            <person name="Rush J."/>
            <person name="Gygi S.P."/>
        </authorList>
    </citation>
    <scope>PHOSPHORYLATION [LARGE SCALE ANALYSIS] AT SER-386</scope>
    <scope>IDENTIFICATION BY MASS SPECTROMETRY [LARGE SCALE ANALYSIS]</scope>
    <source>
        <tissue>Cervix carcinoma</tissue>
    </source>
</reference>
<reference key="9">
    <citation type="journal article" date="2008" name="Mol. Cell">
        <title>Kinase-selective enrichment enables quantitative phosphoproteomics of the kinome across the cell cycle.</title>
        <authorList>
            <person name="Daub H."/>
            <person name="Olsen J.V."/>
            <person name="Bairlein M."/>
            <person name="Gnad F."/>
            <person name="Oppermann F.S."/>
            <person name="Korner R."/>
            <person name="Greff Z."/>
            <person name="Keri G."/>
            <person name="Stemmann O."/>
            <person name="Mann M."/>
        </authorList>
    </citation>
    <scope>PHOSPHORYLATION [LARGE SCALE ANALYSIS] AT SER-386 AND SER-783</scope>
    <scope>IDENTIFICATION BY MASS SPECTROMETRY [LARGE SCALE ANALYSIS]</scope>
    <source>
        <tissue>Cervix carcinoma</tissue>
    </source>
</reference>
<reference key="10">
    <citation type="journal article" date="2008" name="Proc. Natl. Acad. Sci. U.S.A.">
        <title>A quantitative atlas of mitotic phosphorylation.</title>
        <authorList>
            <person name="Dephoure N."/>
            <person name="Zhou C."/>
            <person name="Villen J."/>
            <person name="Beausoleil S.A."/>
            <person name="Bakalarski C.E."/>
            <person name="Elledge S.J."/>
            <person name="Gygi S.P."/>
        </authorList>
    </citation>
    <scope>PHOSPHORYLATION [LARGE SCALE ANALYSIS] AT SER-386 AND SER-783</scope>
    <scope>IDENTIFICATION BY MASS SPECTROMETRY [LARGE SCALE ANALYSIS]</scope>
    <source>
        <tissue>Cervix carcinoma</tissue>
    </source>
</reference>
<reference key="11">
    <citation type="journal article" date="2009" name="Anal. Chem.">
        <title>Lys-N and trypsin cover complementary parts of the phosphoproteome in a refined SCX-based approach.</title>
        <authorList>
            <person name="Gauci S."/>
            <person name="Helbig A.O."/>
            <person name="Slijper M."/>
            <person name="Krijgsveld J."/>
            <person name="Heck A.J."/>
            <person name="Mohammed S."/>
        </authorList>
    </citation>
    <scope>ACETYLATION [LARGE SCALE ANALYSIS] AT MET-1</scope>
    <scope>IDENTIFICATION BY MASS SPECTROMETRY [LARGE SCALE ANALYSIS]</scope>
</reference>
<reference key="12">
    <citation type="journal article" date="2009" name="Sci. Signal.">
        <title>Quantitative phosphoproteomic analysis of T cell receptor signaling reveals system-wide modulation of protein-protein interactions.</title>
        <authorList>
            <person name="Mayya V."/>
            <person name="Lundgren D.H."/>
            <person name="Hwang S.-I."/>
            <person name="Rezaul K."/>
            <person name="Wu L."/>
            <person name="Eng J.K."/>
            <person name="Rodionov V."/>
            <person name="Han D.K."/>
        </authorList>
    </citation>
    <scope>PHOSPHORYLATION [LARGE SCALE ANALYSIS] AT SER-783</scope>
    <scope>IDENTIFICATION BY MASS SPECTROMETRY [LARGE SCALE ANALYSIS]</scope>
    <source>
        <tissue>Leukemic T-cell</tissue>
    </source>
</reference>
<reference key="13">
    <citation type="journal article" date="2009" name="Science">
        <title>Lysine acetylation targets protein complexes and co-regulates major cellular functions.</title>
        <authorList>
            <person name="Choudhary C."/>
            <person name="Kumar C."/>
            <person name="Gnad F."/>
            <person name="Nielsen M.L."/>
            <person name="Rehman M."/>
            <person name="Walther T.C."/>
            <person name="Olsen J.V."/>
            <person name="Mann M."/>
        </authorList>
    </citation>
    <scope>ACETYLATION [LARGE SCALE ANALYSIS] AT LYS-395; LYS-486 AND LYS-688</scope>
    <scope>IDENTIFICATION BY MASS SPECTROMETRY [LARGE SCALE ANALYSIS]</scope>
</reference>
<reference key="14">
    <citation type="journal article" date="2010" name="Sci. Signal.">
        <title>Quantitative phosphoproteomics reveals widespread full phosphorylation site occupancy during mitosis.</title>
        <authorList>
            <person name="Olsen J.V."/>
            <person name="Vermeulen M."/>
            <person name="Santamaria A."/>
            <person name="Kumar C."/>
            <person name="Miller M.L."/>
            <person name="Jensen L.J."/>
            <person name="Gnad F."/>
            <person name="Cox J."/>
            <person name="Jensen T.S."/>
            <person name="Nigg E.A."/>
            <person name="Brunak S."/>
            <person name="Mann M."/>
        </authorList>
    </citation>
    <scope>PHOSPHORYLATION [LARGE SCALE ANALYSIS] AT SER-386 AND SER-783</scope>
    <scope>IDENTIFICATION BY MASS SPECTROMETRY [LARGE SCALE ANALYSIS]</scope>
    <source>
        <tissue>Cervix carcinoma</tissue>
    </source>
</reference>
<reference key="15">
    <citation type="journal article" date="2011" name="BMC Syst. Biol.">
        <title>Initial characterization of the human central proteome.</title>
        <authorList>
            <person name="Burkard T.R."/>
            <person name="Planyavsky M."/>
            <person name="Kaupe I."/>
            <person name="Breitwieser F.P."/>
            <person name="Buerckstuemmer T."/>
            <person name="Bennett K.L."/>
            <person name="Superti-Furga G."/>
            <person name="Colinge J."/>
        </authorList>
    </citation>
    <scope>IDENTIFICATION BY MASS SPECTROMETRY [LARGE SCALE ANALYSIS]</scope>
</reference>
<reference key="16">
    <citation type="journal article" date="2011" name="Sci. Signal.">
        <title>System-wide temporal characterization of the proteome and phosphoproteome of human embryonic stem cell differentiation.</title>
        <authorList>
            <person name="Rigbolt K.T."/>
            <person name="Prokhorova T.A."/>
            <person name="Akimov V."/>
            <person name="Henningsen J."/>
            <person name="Johansen P.T."/>
            <person name="Kratchmarova I."/>
            <person name="Kassem M."/>
            <person name="Mann M."/>
            <person name="Olsen J.V."/>
            <person name="Blagoev B."/>
        </authorList>
    </citation>
    <scope>PHOSPHORYLATION [LARGE SCALE ANALYSIS] AT SER-386</scope>
    <scope>IDENTIFICATION BY MASS SPECTROMETRY [LARGE SCALE ANALYSIS]</scope>
</reference>
<reference key="17">
    <citation type="journal article" date="2013" name="J. Proteome Res.">
        <title>Toward a comprehensive characterization of a human cancer cell phosphoproteome.</title>
        <authorList>
            <person name="Zhou H."/>
            <person name="Di Palma S."/>
            <person name="Preisinger C."/>
            <person name="Peng M."/>
            <person name="Polat A.N."/>
            <person name="Heck A.J."/>
            <person name="Mohammed S."/>
        </authorList>
    </citation>
    <scope>PHOSPHORYLATION [LARGE SCALE ANALYSIS] AT SER-6; SER-21 AND SER-386</scope>
    <scope>IDENTIFICATION BY MASS SPECTROMETRY [LARGE SCALE ANALYSIS]</scope>
    <source>
        <tissue>Cervix carcinoma</tissue>
        <tissue>Erythroleukemia</tissue>
    </source>
</reference>
<reference key="18">
    <citation type="journal article" date="2021" name="Cell. Signal.">
        <title>PFKP facilitates ATG4B phosphorylation during amino acid deprivation-induced autophagy.</title>
        <authorList>
            <person name="Li X."/>
            <person name="Sun L."/>
            <person name="Yan G."/>
            <person name="Yan X."/>
        </authorList>
    </citation>
    <scope>INTERACTION WITH ATG4B</scope>
    <scope>PHOSPHORYLATION AT SER-386</scope>
    <scope>MUTAGENESIS OF SER-386</scope>
</reference>
<dbReference type="EC" id="2.7.1.11" evidence="4"/>
<dbReference type="EMBL" id="D25328">
    <property type="protein sequence ID" value="BAA04998.1"/>
    <property type="molecule type" value="mRNA"/>
</dbReference>
<dbReference type="EMBL" id="AK092597">
    <property type="protein sequence ID" value="BAG52577.1"/>
    <property type="molecule type" value="mRNA"/>
</dbReference>
<dbReference type="EMBL" id="AK291841">
    <property type="protein sequence ID" value="BAF84530.1"/>
    <property type="molecule type" value="mRNA"/>
</dbReference>
<dbReference type="EMBL" id="AL731533">
    <property type="status" value="NOT_ANNOTATED_CDS"/>
    <property type="molecule type" value="Genomic_DNA"/>
</dbReference>
<dbReference type="EMBL" id="AL451164">
    <property type="status" value="NOT_ANNOTATED_CDS"/>
    <property type="molecule type" value="Genomic_DNA"/>
</dbReference>
<dbReference type="EMBL" id="BC002536">
    <property type="protein sequence ID" value="AAH02536.1"/>
    <property type="molecule type" value="mRNA"/>
</dbReference>
<dbReference type="EMBL" id="BC029138">
    <property type="protein sequence ID" value="AAH29138.1"/>
    <property type="molecule type" value="mRNA"/>
</dbReference>
<dbReference type="EMBL" id="M64784">
    <property type="protein sequence ID" value="AAA36435.1"/>
    <property type="molecule type" value="mRNA"/>
</dbReference>
<dbReference type="CCDS" id="CCDS7059.1">
    <molecule id="Q01813-1"/>
</dbReference>
<dbReference type="PIR" id="JC2055">
    <property type="entry name" value="JC2055"/>
</dbReference>
<dbReference type="RefSeq" id="NP_001229268.1">
    <molecule id="Q01813-2"/>
    <property type="nucleotide sequence ID" value="NM_001242339.2"/>
</dbReference>
<dbReference type="RefSeq" id="NP_002618.1">
    <molecule id="Q01813-1"/>
    <property type="nucleotide sequence ID" value="NM_002627.5"/>
</dbReference>
<dbReference type="PDB" id="4RH3">
    <property type="method" value="X-ray"/>
    <property type="resolution" value="3.02 A"/>
    <property type="chains" value="A/B/C/D=26-762"/>
</dbReference>
<dbReference type="PDB" id="4U1R">
    <property type="method" value="X-ray"/>
    <property type="resolution" value="2.80 A"/>
    <property type="chains" value="A/B/C/D=26-762"/>
</dbReference>
<dbReference type="PDB" id="4WL0">
    <property type="method" value="X-ray"/>
    <property type="resolution" value="2.89 A"/>
    <property type="chains" value="A/B/C/D=26-762"/>
</dbReference>
<dbReference type="PDB" id="4XYJ">
    <property type="method" value="X-ray"/>
    <property type="resolution" value="3.10 A"/>
    <property type="chains" value="A/B/C/D/E/F/G/H=1-784"/>
</dbReference>
<dbReference type="PDB" id="4XYK">
    <property type="method" value="X-ray"/>
    <property type="resolution" value="3.40 A"/>
    <property type="chains" value="A/B/C/D=1-784"/>
</dbReference>
<dbReference type="PDB" id="4XZ2">
    <property type="method" value="X-ray"/>
    <property type="resolution" value="2.67 A"/>
    <property type="chains" value="A/B/C/D=26-762"/>
</dbReference>
<dbReference type="PDB" id="7TFF">
    <property type="method" value="X-ray"/>
    <property type="resolution" value="3.60 A"/>
    <property type="chains" value="A/B/C/D=1-784"/>
</dbReference>
<dbReference type="PDBsum" id="4RH3"/>
<dbReference type="PDBsum" id="4U1R"/>
<dbReference type="PDBsum" id="4WL0"/>
<dbReference type="PDBsum" id="4XYJ"/>
<dbReference type="PDBsum" id="4XYK"/>
<dbReference type="PDBsum" id="4XZ2"/>
<dbReference type="PDBsum" id="7TFF"/>
<dbReference type="SMR" id="Q01813"/>
<dbReference type="BioGRID" id="111235">
    <property type="interactions" value="313"/>
</dbReference>
<dbReference type="ComplexPortal" id="CPX-1999">
    <property type="entry name" value="6-phosphofructokinase, P4 homotetramer"/>
</dbReference>
<dbReference type="DIP" id="DIP-45850N"/>
<dbReference type="FunCoup" id="Q01813">
    <property type="interactions" value="2531"/>
</dbReference>
<dbReference type="IntAct" id="Q01813">
    <property type="interactions" value="93"/>
</dbReference>
<dbReference type="MINT" id="Q01813"/>
<dbReference type="STRING" id="9606.ENSP00000370517"/>
<dbReference type="ChEMBL" id="CHEMBL2972"/>
<dbReference type="GlyCosmos" id="Q01813">
    <property type="glycosylation" value="2 sites, 1 glycan"/>
</dbReference>
<dbReference type="GlyGen" id="Q01813">
    <property type="glycosylation" value="2 sites, 1 O-linked glycan (1 site)"/>
</dbReference>
<dbReference type="iPTMnet" id="Q01813"/>
<dbReference type="MetOSite" id="Q01813"/>
<dbReference type="PhosphoSitePlus" id="Q01813"/>
<dbReference type="SwissPalm" id="Q01813"/>
<dbReference type="BioMuta" id="PFKP"/>
<dbReference type="DMDM" id="1346355"/>
<dbReference type="CPTAC" id="CPTAC-251"/>
<dbReference type="CPTAC" id="CPTAC-252"/>
<dbReference type="jPOST" id="Q01813"/>
<dbReference type="MassIVE" id="Q01813"/>
<dbReference type="PaxDb" id="9606-ENSP00000370517"/>
<dbReference type="PeptideAtlas" id="Q01813"/>
<dbReference type="ProteomicsDB" id="57992">
    <molecule id="Q01813-1"/>
</dbReference>
<dbReference type="ProteomicsDB" id="65275"/>
<dbReference type="Pumba" id="Q01813"/>
<dbReference type="Antibodypedia" id="23840">
    <property type="antibodies" value="524 antibodies from 35 providers"/>
</dbReference>
<dbReference type="DNASU" id="5214"/>
<dbReference type="Ensembl" id="ENST00000381125.9">
    <molecule id="Q01813-1"/>
    <property type="protein sequence ID" value="ENSP00000370517.4"/>
    <property type="gene ID" value="ENSG00000067057.19"/>
</dbReference>
<dbReference type="GeneID" id="5214"/>
<dbReference type="KEGG" id="hsa:5214"/>
<dbReference type="MANE-Select" id="ENST00000381125.9">
    <property type="protein sequence ID" value="ENSP00000370517.4"/>
    <property type="RefSeq nucleotide sequence ID" value="NM_002627.5"/>
    <property type="RefSeq protein sequence ID" value="NP_002618.1"/>
</dbReference>
<dbReference type="UCSC" id="uc001igp.4">
    <molecule id="Q01813-1"/>
    <property type="organism name" value="human"/>
</dbReference>
<dbReference type="AGR" id="HGNC:8878"/>
<dbReference type="CTD" id="5214"/>
<dbReference type="DisGeNET" id="5214"/>
<dbReference type="GeneCards" id="PFKP"/>
<dbReference type="HGNC" id="HGNC:8878">
    <property type="gene designation" value="PFKP"/>
</dbReference>
<dbReference type="HPA" id="ENSG00000067057">
    <property type="expression patterns" value="Tissue enhanced (retina)"/>
</dbReference>
<dbReference type="MIM" id="171840">
    <property type="type" value="gene"/>
</dbReference>
<dbReference type="neXtProt" id="NX_Q01813"/>
<dbReference type="OpenTargets" id="ENSG00000067057"/>
<dbReference type="PharmGKB" id="PA33217"/>
<dbReference type="VEuPathDB" id="HostDB:ENSG00000067057"/>
<dbReference type="eggNOG" id="KOG2440">
    <property type="taxonomic scope" value="Eukaryota"/>
</dbReference>
<dbReference type="GeneTree" id="ENSGT00940000155002"/>
<dbReference type="HOGENOM" id="CLU_011053_0_0_1"/>
<dbReference type="InParanoid" id="Q01813"/>
<dbReference type="OMA" id="CIATRES"/>
<dbReference type="OrthoDB" id="537915at2759"/>
<dbReference type="PAN-GO" id="Q01813">
    <property type="GO annotations" value="11 GO annotations based on evolutionary models"/>
</dbReference>
<dbReference type="PhylomeDB" id="Q01813"/>
<dbReference type="TreeFam" id="TF300411"/>
<dbReference type="BioCyc" id="MetaCyc:HS00894-MONOMER"/>
<dbReference type="BRENDA" id="2.7.1.11">
    <property type="organism ID" value="2681"/>
</dbReference>
<dbReference type="PathwayCommons" id="Q01813"/>
<dbReference type="Reactome" id="R-HSA-70171">
    <property type="pathway name" value="Glycolysis"/>
</dbReference>
<dbReference type="SABIO-RK" id="Q01813"/>
<dbReference type="SignaLink" id="Q01813"/>
<dbReference type="SIGNOR" id="Q01813"/>
<dbReference type="UniPathway" id="UPA00109">
    <property type="reaction ID" value="UER00182"/>
</dbReference>
<dbReference type="BioGRID-ORCS" id="5214">
    <property type="hits" value="22 hits in 1158 CRISPR screens"/>
</dbReference>
<dbReference type="CD-CODE" id="FB4E32DD">
    <property type="entry name" value="Presynaptic clusters and postsynaptic densities"/>
</dbReference>
<dbReference type="ChiTaRS" id="PFKP">
    <property type="organism name" value="human"/>
</dbReference>
<dbReference type="EvolutionaryTrace" id="Q01813"/>
<dbReference type="GeneWiki" id="PFKP"/>
<dbReference type="GenomeRNAi" id="5214"/>
<dbReference type="Pharos" id="Q01813">
    <property type="development level" value="Tbio"/>
</dbReference>
<dbReference type="PRO" id="PR:Q01813"/>
<dbReference type="Proteomes" id="UP000005640">
    <property type="component" value="Chromosome 10"/>
</dbReference>
<dbReference type="RNAct" id="Q01813">
    <property type="molecule type" value="protein"/>
</dbReference>
<dbReference type="Bgee" id="ENSG00000067057">
    <property type="expression patterns" value="Expressed in tendon of biceps brachii and 206 other cell types or tissues"/>
</dbReference>
<dbReference type="ExpressionAtlas" id="Q01813">
    <property type="expression patterns" value="baseline and differential"/>
</dbReference>
<dbReference type="GO" id="GO:0005945">
    <property type="term" value="C:6-phosphofructokinase complex"/>
    <property type="evidence" value="ECO:0000318"/>
    <property type="project" value="GO_Central"/>
</dbReference>
<dbReference type="GO" id="GO:0005737">
    <property type="term" value="C:cytoplasm"/>
    <property type="evidence" value="ECO:0000314"/>
    <property type="project" value="BHF-UCL"/>
</dbReference>
<dbReference type="GO" id="GO:0005829">
    <property type="term" value="C:cytosol"/>
    <property type="evidence" value="ECO:0000304"/>
    <property type="project" value="Reactome"/>
</dbReference>
<dbReference type="GO" id="GO:0070062">
    <property type="term" value="C:extracellular exosome"/>
    <property type="evidence" value="ECO:0007005"/>
    <property type="project" value="UniProtKB"/>
</dbReference>
<dbReference type="GO" id="GO:0016020">
    <property type="term" value="C:membrane"/>
    <property type="evidence" value="ECO:0007005"/>
    <property type="project" value="UniProtKB"/>
</dbReference>
<dbReference type="GO" id="GO:0005634">
    <property type="term" value="C:nucleus"/>
    <property type="evidence" value="ECO:0007005"/>
    <property type="project" value="UniProtKB"/>
</dbReference>
<dbReference type="GO" id="GO:0003872">
    <property type="term" value="F:6-phosphofructokinase activity"/>
    <property type="evidence" value="ECO:0000250"/>
    <property type="project" value="UniProtKB"/>
</dbReference>
<dbReference type="GO" id="GO:0005524">
    <property type="term" value="F:ATP binding"/>
    <property type="evidence" value="ECO:0007669"/>
    <property type="project" value="UniProtKB-KW"/>
</dbReference>
<dbReference type="GO" id="GO:0045296">
    <property type="term" value="F:cadherin binding"/>
    <property type="evidence" value="ECO:0007005"/>
    <property type="project" value="BHF-UCL"/>
</dbReference>
<dbReference type="GO" id="GO:0070095">
    <property type="term" value="F:fructose-6-phosphate binding"/>
    <property type="evidence" value="ECO:0000318"/>
    <property type="project" value="GO_Central"/>
</dbReference>
<dbReference type="GO" id="GO:0042802">
    <property type="term" value="F:identical protein binding"/>
    <property type="evidence" value="ECO:0000353"/>
    <property type="project" value="IntAct"/>
</dbReference>
<dbReference type="GO" id="GO:0046872">
    <property type="term" value="F:metal ion binding"/>
    <property type="evidence" value="ECO:0007669"/>
    <property type="project" value="UniProtKB-KW"/>
</dbReference>
<dbReference type="GO" id="GO:0044877">
    <property type="term" value="F:protein-containing complex binding"/>
    <property type="evidence" value="ECO:0000314"/>
    <property type="project" value="MGI"/>
</dbReference>
<dbReference type="GO" id="GO:0061621">
    <property type="term" value="P:canonical glycolysis"/>
    <property type="evidence" value="ECO:0000318"/>
    <property type="project" value="GO_Central"/>
</dbReference>
<dbReference type="GO" id="GO:1990830">
    <property type="term" value="P:cellular response to leukemia inhibitory factor"/>
    <property type="evidence" value="ECO:0007669"/>
    <property type="project" value="Ensembl"/>
</dbReference>
<dbReference type="GO" id="GO:0030388">
    <property type="term" value="P:fructose 1,6-bisphosphate metabolic process"/>
    <property type="evidence" value="ECO:0000318"/>
    <property type="project" value="GO_Central"/>
</dbReference>
<dbReference type="GO" id="GO:0006002">
    <property type="term" value="P:fructose 6-phosphate metabolic process"/>
    <property type="evidence" value="ECO:0000318"/>
    <property type="project" value="GO_Central"/>
</dbReference>
<dbReference type="CDD" id="cd00764">
    <property type="entry name" value="Eukaryotic_PFK"/>
    <property type="match status" value="1"/>
</dbReference>
<dbReference type="FunFam" id="3.40.50.450:FF:000004">
    <property type="entry name" value="ATP-dependent 6-phosphofructokinase"/>
    <property type="match status" value="1"/>
</dbReference>
<dbReference type="FunFam" id="3.40.50.460:FF:000001">
    <property type="entry name" value="ATP-dependent 6-phosphofructokinase"/>
    <property type="match status" value="1"/>
</dbReference>
<dbReference type="FunFam" id="3.40.50.460:FF:000003">
    <property type="entry name" value="ATP-dependent 6-phosphofructokinase"/>
    <property type="match status" value="1"/>
</dbReference>
<dbReference type="FunFam" id="3.40.50.450:FF:000043">
    <property type="entry name" value="ATP-dependent 6-phosphofructokinase, platelet type"/>
    <property type="match status" value="1"/>
</dbReference>
<dbReference type="FunFam" id="3.40.50.450:FF:000064">
    <property type="entry name" value="Phosphofructokinase, platelet b"/>
    <property type="match status" value="1"/>
</dbReference>
<dbReference type="Gene3D" id="3.40.50.450">
    <property type="match status" value="2"/>
</dbReference>
<dbReference type="Gene3D" id="3.40.50.460">
    <property type="entry name" value="Phosphofructokinase domain"/>
    <property type="match status" value="2"/>
</dbReference>
<dbReference type="HAMAP" id="MF_03184">
    <property type="entry name" value="Phosphofructokinase_I_E"/>
    <property type="match status" value="1"/>
</dbReference>
<dbReference type="InterPro" id="IPR009161">
    <property type="entry name" value="6-Pfructokinase_euk"/>
</dbReference>
<dbReference type="InterPro" id="IPR022953">
    <property type="entry name" value="ATP_PFK"/>
</dbReference>
<dbReference type="InterPro" id="IPR041914">
    <property type="entry name" value="PFK_vert-type"/>
</dbReference>
<dbReference type="InterPro" id="IPR015912">
    <property type="entry name" value="Phosphofructokinase_CS"/>
</dbReference>
<dbReference type="InterPro" id="IPR000023">
    <property type="entry name" value="Phosphofructokinase_dom"/>
</dbReference>
<dbReference type="InterPro" id="IPR035966">
    <property type="entry name" value="PKF_sf"/>
</dbReference>
<dbReference type="NCBIfam" id="TIGR02478">
    <property type="entry name" value="6PF1K_euk"/>
    <property type="match status" value="1"/>
</dbReference>
<dbReference type="PANTHER" id="PTHR13697:SF5">
    <property type="entry name" value="ATP-DEPENDENT 6-PHOSPHOFRUCTOKINASE, PLATELET TYPE"/>
    <property type="match status" value="1"/>
</dbReference>
<dbReference type="PANTHER" id="PTHR13697">
    <property type="entry name" value="PHOSPHOFRUCTOKINASE"/>
    <property type="match status" value="1"/>
</dbReference>
<dbReference type="Pfam" id="PF00365">
    <property type="entry name" value="PFK"/>
    <property type="match status" value="2"/>
</dbReference>
<dbReference type="PIRSF" id="PIRSF000533">
    <property type="entry name" value="ATP_PFK_euk"/>
    <property type="match status" value="1"/>
</dbReference>
<dbReference type="PRINTS" id="PR00476">
    <property type="entry name" value="PHFRCTKINASE"/>
</dbReference>
<dbReference type="SUPFAM" id="SSF53784">
    <property type="entry name" value="Phosphofructokinase"/>
    <property type="match status" value="2"/>
</dbReference>
<dbReference type="PROSITE" id="PS00433">
    <property type="entry name" value="PHOSPHOFRUCTOKINASE"/>
    <property type="match status" value="2"/>
</dbReference>
<evidence type="ECO:0000250" key="1"/>
<evidence type="ECO:0000250" key="2">
    <source>
        <dbReference type="UniProtKB" id="P47859"/>
    </source>
</evidence>
<evidence type="ECO:0000250" key="3">
    <source>
        <dbReference type="UniProtKB" id="P47860"/>
    </source>
</evidence>
<evidence type="ECO:0000255" key="4">
    <source>
        <dbReference type="HAMAP-Rule" id="MF_03184"/>
    </source>
</evidence>
<evidence type="ECO:0000269" key="5">
    <source>
    </source>
</evidence>
<evidence type="ECO:0000303" key="6">
    <source>
    </source>
</evidence>
<evidence type="ECO:0000305" key="7"/>
<evidence type="ECO:0007744" key="8">
    <source>
    </source>
</evidence>
<evidence type="ECO:0007744" key="9">
    <source>
    </source>
</evidence>
<evidence type="ECO:0007744" key="10">
    <source>
    </source>
</evidence>
<evidence type="ECO:0007744" key="11">
    <source>
    </source>
</evidence>
<evidence type="ECO:0007744" key="12">
    <source>
    </source>
</evidence>
<evidence type="ECO:0007744" key="13">
    <source>
    </source>
</evidence>
<evidence type="ECO:0007744" key="14">
    <source>
    </source>
</evidence>
<evidence type="ECO:0007744" key="15">
    <source>
    </source>
</evidence>
<evidence type="ECO:0007744" key="16">
    <source>
    </source>
</evidence>
<evidence type="ECO:0007744" key="17">
    <source>
    </source>
</evidence>
<evidence type="ECO:0007829" key="18">
    <source>
        <dbReference type="PDB" id="4RH3"/>
    </source>
</evidence>
<evidence type="ECO:0007829" key="19">
    <source>
        <dbReference type="PDB" id="4U1R"/>
    </source>
</evidence>
<evidence type="ECO:0007829" key="20">
    <source>
        <dbReference type="PDB" id="4XYJ"/>
    </source>
</evidence>
<evidence type="ECO:0007829" key="21">
    <source>
        <dbReference type="PDB" id="4XYK"/>
    </source>
</evidence>
<evidence type="ECO:0007829" key="22">
    <source>
        <dbReference type="PDB" id="4XZ2"/>
    </source>
</evidence>
<feature type="chain" id="PRO_0000112024" description="ATP-dependent 6-phosphofructokinase, platelet type">
    <location>
        <begin position="1"/>
        <end position="784"/>
    </location>
</feature>
<feature type="region of interest" description="N-terminal catalytic PFK domain 1">
    <location>
        <begin position="1"/>
        <end position="399"/>
    </location>
</feature>
<feature type="region of interest" description="Interdomain linker">
    <location>
        <begin position="400"/>
        <end position="411"/>
    </location>
</feature>
<feature type="region of interest" description="C-terminal regulatory PFK domain 2">
    <location>
        <begin position="412"/>
        <end position="784"/>
    </location>
</feature>
<feature type="active site" description="Proton acceptor" evidence="4">
    <location>
        <position position="175"/>
    </location>
</feature>
<feature type="binding site" evidence="4">
    <location>
        <position position="34"/>
    </location>
    <ligand>
        <name>ATP</name>
        <dbReference type="ChEBI" id="CHEBI:30616"/>
    </ligand>
</feature>
<feature type="binding site" evidence="4">
    <location>
        <begin position="97"/>
        <end position="98"/>
    </location>
    <ligand>
        <name>ATP</name>
        <dbReference type="ChEBI" id="CHEBI:30616"/>
    </ligand>
</feature>
<feature type="binding site" evidence="4">
    <location>
        <begin position="127"/>
        <end position="130"/>
    </location>
    <ligand>
        <name>ATP</name>
        <dbReference type="ChEBI" id="CHEBI:30616"/>
    </ligand>
</feature>
<feature type="binding site" evidence="4">
    <location>
        <position position="128"/>
    </location>
    <ligand>
        <name>Mg(2+)</name>
        <dbReference type="ChEBI" id="CHEBI:18420"/>
        <note>catalytic</note>
    </ligand>
</feature>
<feature type="binding site" description="in other chain" evidence="4">
    <location>
        <begin position="173"/>
        <end position="175"/>
    </location>
    <ligand>
        <name>substrate</name>
        <note>ligand shared between dimeric partners</note>
    </ligand>
</feature>
<feature type="binding site" evidence="4">
    <location>
        <position position="210"/>
    </location>
    <ligand>
        <name>substrate</name>
        <note>ligand shared between dimeric partners</note>
    </ligand>
</feature>
<feature type="binding site" description="in other chain" evidence="4">
    <location>
        <begin position="217"/>
        <end position="219"/>
    </location>
    <ligand>
        <name>substrate</name>
        <note>ligand shared between dimeric partners</note>
    </ligand>
</feature>
<feature type="binding site" description="in other chain" evidence="4">
    <location>
        <position position="273"/>
    </location>
    <ligand>
        <name>substrate</name>
        <note>ligand shared between dimeric partners</note>
    </ligand>
</feature>
<feature type="binding site" evidence="4">
    <location>
        <position position="301"/>
    </location>
    <ligand>
        <name>substrate</name>
        <note>ligand shared between dimeric partners</note>
    </ligand>
</feature>
<feature type="binding site" description="in other chain" evidence="4">
    <location>
        <begin position="307"/>
        <end position="310"/>
    </location>
    <ligand>
        <name>substrate</name>
        <note>ligand shared between dimeric partners</note>
    </ligand>
</feature>
<feature type="binding site" description="in other chain" evidence="4">
    <location>
        <position position="481"/>
    </location>
    <ligand>
        <name>beta-D-fructose 2,6-bisphosphate</name>
        <dbReference type="ChEBI" id="CHEBI:58579"/>
        <note>allosteric activator; ligand shared between dimeric partners</note>
    </ligand>
</feature>
<feature type="binding site" description="in other chain" evidence="4">
    <location>
        <begin position="538"/>
        <end position="542"/>
    </location>
    <ligand>
        <name>beta-D-fructose 2,6-bisphosphate</name>
        <dbReference type="ChEBI" id="CHEBI:58579"/>
        <note>allosteric activator; ligand shared between dimeric partners</note>
    </ligand>
</feature>
<feature type="binding site" evidence="4">
    <location>
        <position position="576"/>
    </location>
    <ligand>
        <name>beta-D-fructose 2,6-bisphosphate</name>
        <dbReference type="ChEBI" id="CHEBI:58579"/>
        <note>allosteric activator; ligand shared between dimeric partners</note>
    </ligand>
</feature>
<feature type="binding site" description="in other chain" evidence="4">
    <location>
        <begin position="583"/>
        <end position="585"/>
    </location>
    <ligand>
        <name>beta-D-fructose 2,6-bisphosphate</name>
        <dbReference type="ChEBI" id="CHEBI:58579"/>
        <note>allosteric activator; ligand shared between dimeric partners</note>
    </ligand>
</feature>
<feature type="binding site" description="in other chain" evidence="4">
    <location>
        <position position="639"/>
    </location>
    <ligand>
        <name>beta-D-fructose 2,6-bisphosphate</name>
        <dbReference type="ChEBI" id="CHEBI:58579"/>
        <note>allosteric activator; ligand shared between dimeric partners</note>
    </ligand>
</feature>
<feature type="binding site" evidence="4">
    <location>
        <position position="665"/>
    </location>
    <ligand>
        <name>beta-D-fructose 2,6-bisphosphate</name>
        <dbReference type="ChEBI" id="CHEBI:58579"/>
        <note>allosteric activator; ligand shared between dimeric partners</note>
    </ligand>
</feature>
<feature type="binding site" description="in other chain" evidence="4">
    <location>
        <begin position="671"/>
        <end position="674"/>
    </location>
    <ligand>
        <name>beta-D-fructose 2,6-bisphosphate</name>
        <dbReference type="ChEBI" id="CHEBI:58579"/>
        <note>allosteric activator; ligand shared between dimeric partners</note>
    </ligand>
</feature>
<feature type="binding site" description="in other chain" evidence="4">
    <location>
        <position position="744"/>
    </location>
    <ligand>
        <name>beta-D-fructose 2,6-bisphosphate</name>
        <dbReference type="ChEBI" id="CHEBI:58579"/>
        <note>allosteric activator; ligand shared between dimeric partners</note>
    </ligand>
</feature>
<feature type="modified residue" description="N-acetylmethionine" evidence="12">
    <location>
        <position position="1"/>
    </location>
</feature>
<feature type="modified residue" description="Phosphoserine" evidence="17">
    <location>
        <position position="6"/>
    </location>
</feature>
<feature type="modified residue" description="Phosphoserine" evidence="2">
    <location>
        <position position="12"/>
    </location>
</feature>
<feature type="modified residue" description="Phosphoserine" evidence="17">
    <location>
        <position position="21"/>
    </location>
</feature>
<feature type="modified residue" description="Phosphoserine" evidence="3">
    <location>
        <position position="142"/>
    </location>
</feature>
<feature type="modified residue" description="Phosphoserine" evidence="5 9 10 11 15 16 17">
    <location>
        <position position="386"/>
    </location>
</feature>
<feature type="modified residue" description="N6-acetyllysine" evidence="13">
    <location>
        <position position="395"/>
    </location>
</feature>
<feature type="modified residue" description="N6-acetyllysine" evidence="13">
    <location>
        <position position="486"/>
    </location>
</feature>
<feature type="modified residue" description="Phosphotyrosine" evidence="8">
    <location>
        <position position="651"/>
    </location>
</feature>
<feature type="modified residue" description="N6-acetyllysine" evidence="13">
    <location>
        <position position="688"/>
    </location>
</feature>
<feature type="modified residue" description="Phosphoserine" evidence="10 11 14 15">
    <location>
        <position position="783"/>
    </location>
</feature>
<feature type="glycosylation site" description="O-linked (GlcNAc) serine" evidence="1">
    <location>
        <position position="540"/>
    </location>
</feature>
<feature type="splice variant" id="VSP_046416" description="In isoform 2." evidence="6">
    <original>MDADDSRAPKGSLRKFLEHLSGAGKAIGVLTSGGDAQGMNAAVRAVVRMGIYVGAKVYFIYEGYQGMVDGGSNIAEADWESVSSILQ</original>
    <variation>MCGYERCRPCRGAHGYLRGGQGVLHLRGLPGHGGRRLKHRRGRLGECLQHPASGAVRGDWREKPGCWSHRFPCPGRHAL</variation>
    <location>
        <begin position="1"/>
        <end position="87"/>
    </location>
</feature>
<feature type="mutagenesis site" description="Decreased interaction with ATG4B." evidence="5">
    <original>S</original>
    <variation>A</variation>
    <location>
        <position position="386"/>
    </location>
</feature>
<feature type="sequence conflict" description="In Ref. 5." evidence="7" ref="5">
    <original>PG</original>
    <variation>IP</variation>
    <location>
        <begin position="484"/>
        <end position="485"/>
    </location>
</feature>
<feature type="sequence conflict" description="In Ref. 5; AAA36435." evidence="7" ref="5">
    <location>
        <position position="498"/>
    </location>
</feature>
<feature type="sequence conflict" description="In Ref. 2; BAG52577." evidence="7" ref="2">
    <original>S</original>
    <variation>P</variation>
    <location>
        <position position="655"/>
    </location>
</feature>
<feature type="sequence conflict" description="In Ref. 5; AAA36435." evidence="7" ref="5">
    <original>A</original>
    <variation>E</variation>
    <location>
        <position position="699"/>
    </location>
</feature>
<feature type="turn" evidence="20">
    <location>
        <begin position="17"/>
        <end position="19"/>
    </location>
</feature>
<feature type="strand" evidence="22">
    <location>
        <begin position="26"/>
        <end position="31"/>
    </location>
</feature>
<feature type="helix" evidence="22">
    <location>
        <begin position="39"/>
        <end position="53"/>
    </location>
</feature>
<feature type="strand" evidence="22">
    <location>
        <begin position="56"/>
        <end position="60"/>
    </location>
</feature>
<feature type="helix" evidence="22">
    <location>
        <begin position="63"/>
        <end position="69"/>
    </location>
</feature>
<feature type="helix" evidence="22">
    <location>
        <begin position="71"/>
        <end position="73"/>
    </location>
</feature>
<feature type="strand" evidence="22">
    <location>
        <begin position="74"/>
        <end position="76"/>
    </location>
</feature>
<feature type="helix" evidence="22">
    <location>
        <begin position="79"/>
        <end position="81"/>
    </location>
</feature>
<feature type="turn" evidence="18">
    <location>
        <begin position="83"/>
        <end position="87"/>
    </location>
</feature>
<feature type="strand" evidence="22">
    <location>
        <begin position="88"/>
        <end position="90"/>
    </location>
</feature>
<feature type="helix" evidence="22">
    <location>
        <begin position="100"/>
        <end position="102"/>
    </location>
</feature>
<feature type="helix" evidence="22">
    <location>
        <begin position="104"/>
        <end position="116"/>
    </location>
</feature>
<feature type="strand" evidence="22">
    <location>
        <begin position="119"/>
        <end position="126"/>
    </location>
</feature>
<feature type="helix" evidence="22">
    <location>
        <begin position="128"/>
        <end position="139"/>
    </location>
</feature>
<feature type="helix" evidence="22">
    <location>
        <begin position="140"/>
        <end position="142"/>
    </location>
</feature>
<feature type="helix" evidence="22">
    <location>
        <begin position="143"/>
        <end position="149"/>
    </location>
</feature>
<feature type="strand" evidence="22">
    <location>
        <begin position="150"/>
        <end position="152"/>
    </location>
</feature>
<feature type="helix" evidence="22">
    <location>
        <begin position="155"/>
        <end position="160"/>
    </location>
</feature>
<feature type="turn" evidence="22">
    <location>
        <begin position="161"/>
        <end position="163"/>
    </location>
</feature>
<feature type="strand" evidence="22">
    <location>
        <begin position="166"/>
        <end position="171"/>
    </location>
</feature>
<feature type="strand" evidence="21">
    <location>
        <begin position="179"/>
        <end position="183"/>
    </location>
</feature>
<feature type="helix" evidence="22">
    <location>
        <begin position="187"/>
        <end position="208"/>
    </location>
</feature>
<feature type="strand" evidence="22">
    <location>
        <begin position="210"/>
        <end position="217"/>
    </location>
</feature>
<feature type="helix" evidence="22">
    <location>
        <begin position="223"/>
        <end position="232"/>
    </location>
</feature>
<feature type="strand" evidence="22">
    <location>
        <begin position="235"/>
        <end position="238"/>
    </location>
</feature>
<feature type="strand" evidence="22">
    <location>
        <begin position="240"/>
        <end position="242"/>
    </location>
</feature>
<feature type="helix" evidence="22">
    <location>
        <begin position="248"/>
        <end position="261"/>
    </location>
</feature>
<feature type="strand" evidence="22">
    <location>
        <begin position="266"/>
        <end position="272"/>
    </location>
</feature>
<feature type="strand" evidence="21">
    <location>
        <begin position="278"/>
        <end position="280"/>
    </location>
</feature>
<feature type="helix" evidence="22">
    <location>
        <begin position="285"/>
        <end position="296"/>
    </location>
</feature>
<feature type="strand" evidence="22">
    <location>
        <begin position="300"/>
        <end position="304"/>
    </location>
</feature>
<feature type="helix" evidence="22">
    <location>
        <begin position="306"/>
        <end position="310"/>
    </location>
</feature>
<feature type="helix" evidence="22">
    <location>
        <begin position="316"/>
        <end position="335"/>
    </location>
</feature>
<feature type="strand" evidence="22">
    <location>
        <begin position="338"/>
        <end position="340"/>
    </location>
</feature>
<feature type="strand" evidence="22">
    <location>
        <begin position="343"/>
        <end position="348"/>
    </location>
</feature>
<feature type="strand" evidence="22">
    <location>
        <begin position="351"/>
        <end position="356"/>
    </location>
</feature>
<feature type="helix" evidence="22">
    <location>
        <begin position="357"/>
        <end position="373"/>
    </location>
</feature>
<feature type="helix" evidence="22">
    <location>
        <begin position="376"/>
        <end position="383"/>
    </location>
</feature>
<feature type="helix" evidence="22">
    <location>
        <begin position="385"/>
        <end position="398"/>
    </location>
</feature>
<feature type="helix" evidence="22">
    <location>
        <begin position="403"/>
        <end position="405"/>
    </location>
</feature>
<feature type="strand" evidence="22">
    <location>
        <begin position="412"/>
        <end position="420"/>
    </location>
</feature>
<feature type="helix" evidence="22">
    <location>
        <begin position="425"/>
        <end position="438"/>
    </location>
</feature>
<feature type="strand" evidence="22">
    <location>
        <begin position="442"/>
        <end position="446"/>
    </location>
</feature>
<feature type="helix" evidence="22">
    <location>
        <begin position="449"/>
        <end position="454"/>
    </location>
</feature>
<feature type="strand" evidence="22">
    <location>
        <begin position="458"/>
        <end position="460"/>
    </location>
</feature>
<feature type="turn" evidence="22">
    <location>
        <begin position="463"/>
        <end position="468"/>
    </location>
</feature>
<feature type="strand" evidence="20">
    <location>
        <begin position="474"/>
        <end position="477"/>
    </location>
</feature>
<feature type="helix" evidence="22">
    <location>
        <begin position="484"/>
        <end position="487"/>
    </location>
</feature>
<feature type="helix" evidence="22">
    <location>
        <begin position="488"/>
        <end position="497"/>
    </location>
</feature>
<feature type="strand" evidence="22">
    <location>
        <begin position="500"/>
        <end position="508"/>
    </location>
</feature>
<feature type="helix" evidence="22">
    <location>
        <begin position="509"/>
        <end position="520"/>
    </location>
</feature>
<feature type="turn" evidence="22">
    <location>
        <begin position="521"/>
        <end position="524"/>
    </location>
</feature>
<feature type="helix" evidence="22">
    <location>
        <begin position="526"/>
        <end position="528"/>
    </location>
</feature>
<feature type="strand" evidence="22">
    <location>
        <begin position="532"/>
        <end position="540"/>
    </location>
</feature>
<feature type="helix" evidence="22">
    <location>
        <begin position="552"/>
        <end position="568"/>
    </location>
</feature>
<feature type="strand" evidence="22">
    <location>
        <begin position="570"/>
        <end position="573"/>
    </location>
</feature>
<feature type="strand" evidence="22">
    <location>
        <begin position="576"/>
        <end position="582"/>
    </location>
</feature>
<feature type="helix" evidence="22">
    <location>
        <begin position="589"/>
        <end position="598"/>
    </location>
</feature>
<feature type="strand" evidence="22">
    <location>
        <begin position="601"/>
        <end position="604"/>
    </location>
</feature>
<feature type="strand" evidence="20">
    <location>
        <begin position="606"/>
        <end position="608"/>
    </location>
</feature>
<feature type="helix" evidence="22">
    <location>
        <begin position="612"/>
        <end position="625"/>
    </location>
</feature>
<feature type="strand" evidence="22">
    <location>
        <begin position="632"/>
        <end position="638"/>
    </location>
</feature>
<feature type="strand" evidence="22">
    <location>
        <begin position="643"/>
        <end position="645"/>
    </location>
</feature>
<feature type="helix" evidence="22">
    <location>
        <begin position="647"/>
        <end position="657"/>
    </location>
</feature>
<feature type="turn" evidence="22">
    <location>
        <begin position="658"/>
        <end position="661"/>
    </location>
</feature>
<feature type="strand" evidence="22">
    <location>
        <begin position="663"/>
        <end position="668"/>
    </location>
</feature>
<feature type="helix" evidence="22">
    <location>
        <begin position="670"/>
        <end position="673"/>
    </location>
</feature>
<feature type="helix" evidence="22">
    <location>
        <begin position="680"/>
        <end position="702"/>
    </location>
</feature>
<feature type="helix" evidence="22">
    <location>
        <begin position="714"/>
        <end position="716"/>
    </location>
</feature>
<feature type="strand" evidence="22">
    <location>
        <begin position="717"/>
        <end position="723"/>
    </location>
</feature>
<feature type="strand" evidence="22">
    <location>
        <begin position="726"/>
        <end position="731"/>
    </location>
</feature>
<feature type="helix" evidence="22">
    <location>
        <begin position="732"/>
        <end position="735"/>
    </location>
</feature>
<feature type="helix" evidence="19">
    <location>
        <begin position="736"/>
        <end position="738"/>
    </location>
</feature>
<feature type="turn" evidence="22">
    <location>
        <begin position="741"/>
        <end position="744"/>
    </location>
</feature>
<feature type="strand" evidence="22">
    <location>
        <begin position="745"/>
        <end position="748"/>
    </location>
</feature>
<feature type="helix" evidence="22">
    <location>
        <begin position="750"/>
        <end position="755"/>
    </location>
</feature>
<feature type="helix" evidence="22">
    <location>
        <begin position="756"/>
        <end position="761"/>
    </location>
</feature>
<keyword id="KW-0002">3D-structure</keyword>
<keyword id="KW-0007">Acetylation</keyword>
<keyword id="KW-0021">Allosteric enzyme</keyword>
<keyword id="KW-0025">Alternative splicing</keyword>
<keyword id="KW-0067">ATP-binding</keyword>
<keyword id="KW-0963">Cytoplasm</keyword>
<keyword id="KW-0324">Glycolysis</keyword>
<keyword id="KW-0325">Glycoprotein</keyword>
<keyword id="KW-0418">Kinase</keyword>
<keyword id="KW-0460">Magnesium</keyword>
<keyword id="KW-0479">Metal-binding</keyword>
<keyword id="KW-0547">Nucleotide-binding</keyword>
<keyword id="KW-0597">Phosphoprotein</keyword>
<keyword id="KW-1267">Proteomics identification</keyword>
<keyword id="KW-1185">Reference proteome</keyword>
<keyword id="KW-0808">Transferase</keyword>
<name>PFKAP_HUMAN</name>
<accession>Q01813</accession>
<accession>B3KS15</accession>
<accession>Q5VSR7</accession>
<accession>Q5VSR8</accession>
<proteinExistence type="evidence at protein level"/>